<dbReference type="EC" id="3.1.-.-"/>
<dbReference type="EMBL" id="CH473980">
    <property type="protein sequence ID" value="EDM08560.1"/>
    <property type="molecule type" value="Genomic_DNA"/>
</dbReference>
<dbReference type="EMBL" id="CH473980">
    <property type="protein sequence ID" value="EDM08562.1"/>
    <property type="molecule type" value="Genomic_DNA"/>
</dbReference>
<dbReference type="EMBL" id="BC166435">
    <property type="protein sequence ID" value="AAI66435.1"/>
    <property type="molecule type" value="mRNA"/>
</dbReference>
<dbReference type="RefSeq" id="NP_001101957.1">
    <property type="nucleotide sequence ID" value="NM_001108487.2"/>
</dbReference>
<dbReference type="RefSeq" id="XP_006229461.1">
    <property type="nucleotide sequence ID" value="XM_006229399.5"/>
</dbReference>
<dbReference type="SMR" id="B2GUW6"/>
<dbReference type="FunCoup" id="B2GUW6">
    <property type="interactions" value="1712"/>
</dbReference>
<dbReference type="STRING" id="10116.ENSRNOP00000062841"/>
<dbReference type="PhosphoSitePlus" id="B2GUW6"/>
<dbReference type="PaxDb" id="10116-ENSRNOP00000062841"/>
<dbReference type="Ensembl" id="ENSRNOT00000064438.2">
    <property type="protein sequence ID" value="ENSRNOP00000062841.1"/>
    <property type="gene ID" value="ENSRNOG00000018421.7"/>
</dbReference>
<dbReference type="GeneID" id="361594"/>
<dbReference type="KEGG" id="rno:361594"/>
<dbReference type="UCSC" id="RGD:1305051">
    <property type="organism name" value="rat"/>
</dbReference>
<dbReference type="AGR" id="RGD:1305051"/>
<dbReference type="CTD" id="64782"/>
<dbReference type="RGD" id="1305051">
    <property type="gene designation" value="Aen"/>
</dbReference>
<dbReference type="eggNOG" id="KOG2249">
    <property type="taxonomic scope" value="Eukaryota"/>
</dbReference>
<dbReference type="GeneTree" id="ENSGT00940000161660"/>
<dbReference type="HOGENOM" id="CLU_022453_0_0_1"/>
<dbReference type="InParanoid" id="B2GUW6"/>
<dbReference type="OMA" id="TDTEQYM"/>
<dbReference type="OrthoDB" id="16516at2759"/>
<dbReference type="PhylomeDB" id="B2GUW6"/>
<dbReference type="PRO" id="PR:B2GUW6"/>
<dbReference type="Proteomes" id="UP000002494">
    <property type="component" value="Chromosome 1"/>
</dbReference>
<dbReference type="Proteomes" id="UP000234681">
    <property type="component" value="Chromosome 1"/>
</dbReference>
<dbReference type="Bgee" id="ENSRNOG00000018421">
    <property type="expression patterns" value="Expressed in pancreas and 20 other cell types or tissues"/>
</dbReference>
<dbReference type="GO" id="GO:0031965">
    <property type="term" value="C:nuclear membrane"/>
    <property type="evidence" value="ECO:0007669"/>
    <property type="project" value="Ensembl"/>
</dbReference>
<dbReference type="GO" id="GO:0005730">
    <property type="term" value="C:nucleolus"/>
    <property type="evidence" value="ECO:0000250"/>
    <property type="project" value="UniProtKB"/>
</dbReference>
<dbReference type="GO" id="GO:0005654">
    <property type="term" value="C:nucleoplasm"/>
    <property type="evidence" value="ECO:0000250"/>
    <property type="project" value="UniProtKB"/>
</dbReference>
<dbReference type="GO" id="GO:0005634">
    <property type="term" value="C:nucleus"/>
    <property type="evidence" value="ECO:0000318"/>
    <property type="project" value="GO_Central"/>
</dbReference>
<dbReference type="GO" id="GO:0004529">
    <property type="term" value="F:DNA exonuclease activity"/>
    <property type="evidence" value="ECO:0000266"/>
    <property type="project" value="RGD"/>
</dbReference>
<dbReference type="GO" id="GO:0004527">
    <property type="term" value="F:exonuclease activity"/>
    <property type="evidence" value="ECO:0000250"/>
    <property type="project" value="UniProtKB"/>
</dbReference>
<dbReference type="GO" id="GO:0003676">
    <property type="term" value="F:nucleic acid binding"/>
    <property type="evidence" value="ECO:0007669"/>
    <property type="project" value="InterPro"/>
</dbReference>
<dbReference type="GO" id="GO:0042771">
    <property type="term" value="P:intrinsic apoptotic signaling pathway in response to DNA damage by p53 class mediator"/>
    <property type="evidence" value="ECO:0000250"/>
    <property type="project" value="UniProtKB"/>
</dbReference>
<dbReference type="GO" id="GO:0010212">
    <property type="term" value="P:response to ionizing radiation"/>
    <property type="evidence" value="ECO:0000250"/>
    <property type="project" value="UniProtKB"/>
</dbReference>
<dbReference type="GO" id="GO:0006396">
    <property type="term" value="P:RNA processing"/>
    <property type="evidence" value="ECO:0000318"/>
    <property type="project" value="GO_Central"/>
</dbReference>
<dbReference type="FunFam" id="3.30.420.10:FF:000007">
    <property type="entry name" value="Interferon-stimulated exonuclease gene 20"/>
    <property type="match status" value="1"/>
</dbReference>
<dbReference type="Gene3D" id="3.30.420.10">
    <property type="entry name" value="Ribonuclease H-like superfamily/Ribonuclease H"/>
    <property type="match status" value="1"/>
</dbReference>
<dbReference type="InterPro" id="IPR013520">
    <property type="entry name" value="Exonuclease_RNaseT/DNA_pol3"/>
</dbReference>
<dbReference type="InterPro" id="IPR047021">
    <property type="entry name" value="REXO1/3/4-like"/>
</dbReference>
<dbReference type="InterPro" id="IPR012337">
    <property type="entry name" value="RNaseH-like_sf"/>
</dbReference>
<dbReference type="InterPro" id="IPR036397">
    <property type="entry name" value="RNaseH_sf"/>
</dbReference>
<dbReference type="PANTHER" id="PTHR12801:SF57">
    <property type="entry name" value="APOPTOSIS-ENHANCING NUCLEASE"/>
    <property type="match status" value="1"/>
</dbReference>
<dbReference type="PANTHER" id="PTHR12801">
    <property type="entry name" value="RNA EXONUCLEASE REXO1 / RECO3 FAMILY MEMBER-RELATED"/>
    <property type="match status" value="1"/>
</dbReference>
<dbReference type="Pfam" id="PF00929">
    <property type="entry name" value="RNase_T"/>
    <property type="match status" value="1"/>
</dbReference>
<dbReference type="SMART" id="SM00479">
    <property type="entry name" value="EXOIII"/>
    <property type="match status" value="1"/>
</dbReference>
<dbReference type="SUPFAM" id="SSF53098">
    <property type="entry name" value="Ribonuclease H-like"/>
    <property type="match status" value="1"/>
</dbReference>
<accession>B2GUW6</accession>
<gene>
    <name evidence="2" type="primary">Aen</name>
    <name evidence="5" type="synonym">Isg20l1</name>
</gene>
<keyword id="KW-0053">Apoptosis</keyword>
<keyword id="KW-0227">DNA damage</keyword>
<keyword id="KW-0269">Exonuclease</keyword>
<keyword id="KW-0378">Hydrolase</keyword>
<keyword id="KW-0540">Nuclease</keyword>
<keyword id="KW-0539">Nucleus</keyword>
<keyword id="KW-1185">Reference proteome</keyword>
<feature type="chain" id="PRO_0000355124" description="Apoptosis-enhancing nuclease">
    <location>
        <begin position="1"/>
        <end position="332"/>
    </location>
</feature>
<feature type="domain" description="Exonuclease" evidence="3">
    <location>
        <begin position="105"/>
        <end position="261"/>
    </location>
</feature>
<feature type="region of interest" description="Disordered" evidence="4">
    <location>
        <begin position="1"/>
        <end position="102"/>
    </location>
</feature>
<feature type="region of interest" description="Disordered" evidence="4">
    <location>
        <begin position="272"/>
        <end position="332"/>
    </location>
</feature>
<feature type="short sequence motif" description="Nucleolar localization signal" evidence="2">
    <location>
        <begin position="21"/>
        <end position="29"/>
    </location>
</feature>
<feature type="short sequence motif" description="Nuclear localization signal" evidence="2">
    <location>
        <begin position="160"/>
        <end position="183"/>
    </location>
</feature>
<feature type="compositionally biased region" description="Basic residues" evidence="4">
    <location>
        <begin position="20"/>
        <end position="36"/>
    </location>
</feature>
<feature type="compositionally biased region" description="Polar residues" evidence="4">
    <location>
        <begin position="63"/>
        <end position="73"/>
    </location>
</feature>
<feature type="compositionally biased region" description="Basic and acidic residues" evidence="4">
    <location>
        <begin position="310"/>
        <end position="321"/>
    </location>
</feature>
<reference evidence="6" key="1">
    <citation type="submission" date="2005-07" db="EMBL/GenBank/DDBJ databases">
        <authorList>
            <person name="Mural R.J."/>
            <person name="Adams M.D."/>
            <person name="Myers E.W."/>
            <person name="Smith H.O."/>
            <person name="Venter J.C."/>
        </authorList>
    </citation>
    <scope>NUCLEOTIDE SEQUENCE [LARGE SCALE GENOMIC DNA]</scope>
</reference>
<reference evidence="5" key="2">
    <citation type="journal article" date="2004" name="Genome Res.">
        <title>The status, quality, and expansion of the NIH full-length cDNA project: the Mammalian Gene Collection (MGC).</title>
        <authorList>
            <consortium name="The MGC Project Team"/>
        </authorList>
    </citation>
    <scope>NUCLEOTIDE SEQUENCE [LARGE SCALE MRNA]</scope>
    <source>
        <tissue evidence="5">Liver</tissue>
    </source>
</reference>
<protein>
    <recommendedName>
        <fullName evidence="2">Apoptosis-enhancing nuclease</fullName>
        <ecNumber>3.1.-.-</ecNumber>
    </recommendedName>
    <alternativeName>
        <fullName evidence="7">Interferon-stimulated 20 kDa exonuclease-like 1</fullName>
    </alternativeName>
</protein>
<proteinExistence type="evidence at transcript level"/>
<evidence type="ECO:0000250" key="1"/>
<evidence type="ECO:0000250" key="2">
    <source>
        <dbReference type="UniProtKB" id="Q8WTP8"/>
    </source>
</evidence>
<evidence type="ECO:0000255" key="3"/>
<evidence type="ECO:0000256" key="4">
    <source>
        <dbReference type="SAM" id="MobiDB-lite"/>
    </source>
</evidence>
<evidence type="ECO:0000312" key="5">
    <source>
        <dbReference type="EMBL" id="AAI66435.1"/>
    </source>
</evidence>
<evidence type="ECO:0000312" key="6">
    <source>
        <dbReference type="EMBL" id="EDM08560.1"/>
    </source>
</evidence>
<evidence type="ECO:0000312" key="7">
    <source>
        <dbReference type="RGD" id="1305051"/>
    </source>
</evidence>
<organism>
    <name type="scientific">Rattus norvegicus</name>
    <name type="common">Rat</name>
    <dbReference type="NCBI Taxonomy" id="10116"/>
    <lineage>
        <taxon>Eukaryota</taxon>
        <taxon>Metazoa</taxon>
        <taxon>Chordata</taxon>
        <taxon>Craniata</taxon>
        <taxon>Vertebrata</taxon>
        <taxon>Euteleostomi</taxon>
        <taxon>Mammalia</taxon>
        <taxon>Eutheria</taxon>
        <taxon>Euarchontoglires</taxon>
        <taxon>Glires</taxon>
        <taxon>Rodentia</taxon>
        <taxon>Myomorpha</taxon>
        <taxon>Muroidea</taxon>
        <taxon>Muridae</taxon>
        <taxon>Murinae</taxon>
        <taxon>Rattus</taxon>
    </lineage>
</organism>
<sequence length="332" mass="37061">MVPREVPESSLTSLKTKDVARRRHKRRSRQHQRFMARKALLQEQESLSMVPGPGLCPLPSPTQTPAGTEASGNRKQRTKARSGSKGLCSKRPVPREAPSSGPSKYVAIDCEMVGTGPQGRVSELARCSVVSYSGDVLYDKYIRPEMPIVDYRTRWSGITRQHMHKAIPFQVAQKEILKLLKGKVVVGHALHNDFQALKYVHPGSQIRDTTYVPNLLSQPSSLTRARVSLKDLALNLLHKKIQVGHHGHSSVEDAMTAMELYQLVEVQWEQQVASTAKAHPEDRGPDSSTDVEQYMDDQYWPEDLAQSTRGDTREAQDRQEGEEGQGARSAPP</sequence>
<comment type="function">
    <text evidence="1">Exonuclease with activity against single- and double-stranded DNA and RNA. Mediates p53-induced apoptosis. When induced by p53 following DNA damage, digests double-stranded DNA to form single-stranded DNA and amplifies DNA damage signals, leading to enhancement of apoptosis (By similarity).</text>
</comment>
<comment type="subcellular location">
    <subcellularLocation>
        <location evidence="2">Nucleus</location>
    </subcellularLocation>
    <subcellularLocation>
        <location evidence="2">Nucleus</location>
        <location evidence="2">Nucleolus</location>
    </subcellularLocation>
    <text evidence="2">Localized predomintly in the nucleolus. Translocates from the nucleolus to the nucleoplasm upon apoptosis induction (By similarity).</text>
</comment>
<name>AEN_RAT</name>